<reference key="1">
    <citation type="journal article" date="2010" name="BMC Genomics">
        <title>Genome-wide cloning and sequence analysis of leucine-rich repeat receptor-like protein kinase genes in Arabidopsis thaliana.</title>
        <authorList>
            <person name="Gou X."/>
            <person name="He K."/>
            <person name="Yang H."/>
            <person name="Yuan T."/>
            <person name="Lin H."/>
            <person name="Clouse S.D."/>
            <person name="Li J."/>
        </authorList>
    </citation>
    <scope>NUCLEOTIDE SEQUENCE [MRNA]</scope>
</reference>
<reference key="2">
    <citation type="submission" date="1999-04" db="EMBL/GenBank/DDBJ databases">
        <title>Structural analysis of Arabidopsis thaliana chromosome 5. XI.</title>
        <authorList>
            <person name="Kaneko T."/>
            <person name="Katoh T."/>
            <person name="Asamizu E."/>
            <person name="Sato S."/>
            <person name="Nakamura Y."/>
            <person name="Kotani H."/>
            <person name="Tabata S."/>
        </authorList>
    </citation>
    <scope>NUCLEOTIDE SEQUENCE [LARGE SCALE GENOMIC DNA]</scope>
    <source>
        <strain>cv. Columbia</strain>
    </source>
</reference>
<reference key="3">
    <citation type="journal article" date="2017" name="Plant J.">
        <title>Araport11: a complete reannotation of the Arabidopsis thaliana reference genome.</title>
        <authorList>
            <person name="Cheng C.Y."/>
            <person name="Krishnakumar V."/>
            <person name="Chan A.P."/>
            <person name="Thibaud-Nissen F."/>
            <person name="Schobel S."/>
            <person name="Town C.D."/>
        </authorList>
    </citation>
    <scope>GENOME REANNOTATION</scope>
    <source>
        <strain>cv. Columbia</strain>
    </source>
</reference>
<reference key="4">
    <citation type="journal article" date="2002" name="Science">
        <title>Functional annotation of a full-length Arabidopsis cDNA collection.</title>
        <authorList>
            <person name="Seki M."/>
            <person name="Narusaka M."/>
            <person name="Kamiya A."/>
            <person name="Ishida J."/>
            <person name="Satou M."/>
            <person name="Sakurai T."/>
            <person name="Nakajima M."/>
            <person name="Enju A."/>
            <person name="Akiyama K."/>
            <person name="Oono Y."/>
            <person name="Muramatsu M."/>
            <person name="Hayashizaki Y."/>
            <person name="Kawai J."/>
            <person name="Carninci P."/>
            <person name="Itoh M."/>
            <person name="Ishii Y."/>
            <person name="Arakawa T."/>
            <person name="Shibata K."/>
            <person name="Shinagawa A."/>
            <person name="Shinozaki K."/>
        </authorList>
    </citation>
    <scope>NUCLEOTIDE SEQUENCE [LARGE SCALE MRNA]</scope>
    <source>
        <strain>cv. Columbia</strain>
    </source>
</reference>
<reference key="5">
    <citation type="journal article" date="2003" name="Science">
        <title>Empirical analysis of transcriptional activity in the Arabidopsis genome.</title>
        <authorList>
            <person name="Yamada K."/>
            <person name="Lim J."/>
            <person name="Dale J.M."/>
            <person name="Chen H."/>
            <person name="Shinn P."/>
            <person name="Palm C.J."/>
            <person name="Southwick A.M."/>
            <person name="Wu H.C."/>
            <person name="Kim C.J."/>
            <person name="Nguyen M."/>
            <person name="Pham P.K."/>
            <person name="Cheuk R.F."/>
            <person name="Karlin-Newmann G."/>
            <person name="Liu S.X."/>
            <person name="Lam B."/>
            <person name="Sakano H."/>
            <person name="Wu T."/>
            <person name="Yu G."/>
            <person name="Miranda M."/>
            <person name="Quach H.L."/>
            <person name="Tripp M."/>
            <person name="Chang C.H."/>
            <person name="Lee J.M."/>
            <person name="Toriumi M.J."/>
            <person name="Chan M.M."/>
            <person name="Tang C.C."/>
            <person name="Onodera C.S."/>
            <person name="Deng J.M."/>
            <person name="Akiyama K."/>
            <person name="Ansari Y."/>
            <person name="Arakawa T."/>
            <person name="Banh J."/>
            <person name="Banno F."/>
            <person name="Bowser L."/>
            <person name="Brooks S.Y."/>
            <person name="Carninci P."/>
            <person name="Chao Q."/>
            <person name="Choy N."/>
            <person name="Enju A."/>
            <person name="Goldsmith A.D."/>
            <person name="Gurjal M."/>
            <person name="Hansen N.F."/>
            <person name="Hayashizaki Y."/>
            <person name="Johnson-Hopson C."/>
            <person name="Hsuan V.W."/>
            <person name="Iida K."/>
            <person name="Karnes M."/>
            <person name="Khan S."/>
            <person name="Koesema E."/>
            <person name="Ishida J."/>
            <person name="Jiang P.X."/>
            <person name="Jones T."/>
            <person name="Kawai J."/>
            <person name="Kamiya A."/>
            <person name="Meyers C."/>
            <person name="Nakajima M."/>
            <person name="Narusaka M."/>
            <person name="Seki M."/>
            <person name="Sakurai T."/>
            <person name="Satou M."/>
            <person name="Tamse R."/>
            <person name="Vaysberg M."/>
            <person name="Wallender E.K."/>
            <person name="Wong C."/>
            <person name="Yamamura Y."/>
            <person name="Yuan S."/>
            <person name="Shinozaki K."/>
            <person name="Davis R.W."/>
            <person name="Theologis A."/>
            <person name="Ecker J.R."/>
        </authorList>
    </citation>
    <scope>NUCLEOTIDE SEQUENCE [LARGE SCALE MRNA]</scope>
    <source>
        <strain>cv. Columbia</strain>
    </source>
</reference>
<reference key="6">
    <citation type="journal article" date="2009" name="Plant Physiol.">
        <title>Large-scale Arabidopsis phosphoproteome profiling reveals novel chloroplast kinase substrates and phosphorylation networks.</title>
        <authorList>
            <person name="Reiland S."/>
            <person name="Messerli G."/>
            <person name="Baerenfaller K."/>
            <person name="Gerrits B."/>
            <person name="Endler A."/>
            <person name="Grossmann J."/>
            <person name="Gruissem W."/>
            <person name="Baginsky S."/>
        </authorList>
    </citation>
    <scope>IDENTIFICATION BY MASS SPECTROMETRY [LARGE SCALE ANALYSIS]</scope>
</reference>
<reference key="7">
    <citation type="journal article" date="2020" name="Nature">
        <title>Hydrogen peroxide sensor HPCA1 is an LRR receptor kinase in Arabidopsis.</title>
        <authorList>
            <person name="Wu F."/>
            <person name="Chi Y."/>
            <person name="Jiang Z."/>
            <person name="Xu Y."/>
            <person name="Xie L."/>
            <person name="Huang F."/>
            <person name="Wan D."/>
            <person name="Ni J."/>
            <person name="Yuan F."/>
            <person name="Wu X."/>
            <person name="Zhang Y."/>
            <person name="Wang L."/>
            <person name="Ye R."/>
            <person name="Byeon B."/>
            <person name="Wang W."/>
            <person name="Zhang S."/>
            <person name="Sima M."/>
            <person name="Chen S."/>
            <person name="Zhu M."/>
            <person name="Pei J."/>
            <person name="Johnson D.M."/>
            <person name="Zhu S."/>
            <person name="Cao X."/>
            <person name="Pei C."/>
            <person name="Zai Z."/>
            <person name="Liu Y."/>
            <person name="Liu T."/>
            <person name="Swift G.B."/>
            <person name="Zhang W."/>
            <person name="Yu M."/>
            <person name="Hu Z."/>
            <person name="Siedow J.N."/>
            <person name="Chen X."/>
            <person name="Pei Z.M."/>
        </authorList>
    </citation>
    <scope>FUNCTION</scope>
    <scope>CATALYTIC ACTIVITY</scope>
    <scope>ACTIVITY REGULATION</scope>
    <scope>SUBCELLULAR LOCATION</scope>
    <scope>TISSUE SPECIFICITY</scope>
    <scope>PHOSPHORYLATION AT SER-606; SER-607; THR-786; THR-789; THR-790 AND SER-942</scope>
    <scope>DISULFIDE BOND</scope>
    <scope>DISRUPTION PHENOTYPE</scope>
    <scope>MUTAGENESIS OF CYS-421; CYS-424; CYS-434; CYS-436; LYS-659 AND ASP-773</scope>
</reference>
<protein>
    <recommendedName>
        <fullName evidence="7">Leucine-rich repeat receptor protein kinase HPCA1</fullName>
        <ecNumber evidence="5">2.7.11.1</ecNumber>
    </recommendedName>
    <alternativeName>
        <fullName evidence="6">Protein HYDROGEN-PEROXIDE-INDUCED CALCIUM INCREASES 1</fullName>
    </alternativeName>
</protein>
<comment type="function">
    <text evidence="5">Leucine-rich repeat receptor protein kinase that acts as sensor of extracellular hydrogen peroxide (PubMed:32076270). Required for intracellular calcium influx in response to extracellular hydrogen peroxide (PubMed:32076270). Mediates hydrogen peroxide-induced activation of calcium channels in guard cells and is required for stomatal closure (PubMed:32076270).</text>
</comment>
<comment type="catalytic activity">
    <reaction evidence="5">
        <text>L-seryl-[protein] + ATP = O-phospho-L-seryl-[protein] + ADP + H(+)</text>
        <dbReference type="Rhea" id="RHEA:17989"/>
        <dbReference type="Rhea" id="RHEA-COMP:9863"/>
        <dbReference type="Rhea" id="RHEA-COMP:11604"/>
        <dbReference type="ChEBI" id="CHEBI:15378"/>
        <dbReference type="ChEBI" id="CHEBI:29999"/>
        <dbReference type="ChEBI" id="CHEBI:30616"/>
        <dbReference type="ChEBI" id="CHEBI:83421"/>
        <dbReference type="ChEBI" id="CHEBI:456216"/>
        <dbReference type="EC" id="2.7.11.1"/>
    </reaction>
    <physiologicalReaction direction="left-to-right" evidence="5">
        <dbReference type="Rhea" id="RHEA:17990"/>
    </physiologicalReaction>
</comment>
<comment type="catalytic activity">
    <reaction evidence="5">
        <text>L-threonyl-[protein] + ATP = O-phospho-L-threonyl-[protein] + ADP + H(+)</text>
        <dbReference type="Rhea" id="RHEA:46608"/>
        <dbReference type="Rhea" id="RHEA-COMP:11060"/>
        <dbReference type="Rhea" id="RHEA-COMP:11605"/>
        <dbReference type="ChEBI" id="CHEBI:15378"/>
        <dbReference type="ChEBI" id="CHEBI:30013"/>
        <dbReference type="ChEBI" id="CHEBI:30616"/>
        <dbReference type="ChEBI" id="CHEBI:61977"/>
        <dbReference type="ChEBI" id="CHEBI:456216"/>
        <dbReference type="EC" id="2.7.11.1"/>
    </reaction>
    <physiologicalReaction direction="left-to-right" evidence="5">
        <dbReference type="Rhea" id="RHEA:46609"/>
    </physiologicalReaction>
</comment>
<comment type="activity regulation">
    <text evidence="5">Activated by autophosphorylation on serine and threonine residues in response to extracellular hydrogen peroxide.</text>
</comment>
<comment type="subcellular location">
    <subcellularLocation>
        <location evidence="5">Cell membrane</location>
        <topology evidence="1">Single-pass type I membrane protein</topology>
    </subcellularLocation>
</comment>
<comment type="tissue specificity">
    <text evidence="5">Widely expressed.</text>
</comment>
<comment type="PTM">
    <text evidence="5">Autophosphorylated at Ser-606, Ser-607, Thr-786, Thr-789, Thr-790 and Ser-942 in response to extracellular hydrogen peroxide.</text>
</comment>
<comment type="disruption phenotype">
    <text evidence="5">No visible phenotype under normal growth conditions, but mutant seedlings exhibit reduced accumulation of intracellular calcium in response to extracellular hydrogen peroxide.</text>
</comment>
<comment type="similarity">
    <text evidence="2">Belongs to the protein kinase superfamily. Ser/Thr protein kinase family.</text>
</comment>
<sequence>MSSRTGASLLLILFFFQICSVSALTNGLDASALNALKSEWTTPPDGWEGSDPCGTNWVGITCQNDRVVSISLGNLDLEGKLPADISFLSELRILDLSYNPKLSGPLPPNIGNLGKLRNLILVGCSFSGQIPESIGTLKELIYLSLNLNKFSGTIPPSIGLLSKLYWFDIADNQIEGELPVSNGTSAPGLDMLLQTKHFHFGKNKLSGNIPKELFSSNMSLIHVLFDGNQFTGEIPETLSLVKTLTVLRLDRNKLIGDIPSYLNNLTNLNELYLANNRFTGTLPNLTSLTSLYTLDVSNNTLDFSPIPSWISSLPSLSTLRMEGIQLNGPIPISFFSPPQLQTVILKRNSIVESLDFGTDVSSQLEFVDLQYNEITDYKPSANKVLQVILANNPVCLEAGNGPSYCSAIQHNTSFSTLPTNCSPCEPGMEASPTCRCAYPFMGTLYFRSPSFSGLFNSTNFSILQKAIADFFKKFNYPVDSVGVRNIRENPTDHQLLIDLLVFPLGRESFNQTGMSLVGFAFSNQTYKPPPIFGPYIFKADLYKQFSDVEVSSKSSNKSILIGAVVGVVVLLLLLTIAGIYALRQKKRAERATGQNNPFAKWDTSKSSIDAPQLMGAKAFTFEELKKCTDNFSEANDVGGGGYGKVYRGILPNGQLIAIKRAQQGSLQGGLEFKTEIELLSRVHHKNVVRLLGFCFDRNEQMLVYEYISNGSLKDSLSGKSGIRLDWTRRLKIALGSGKGLAYLHELADPPIIHRDIKSNNILLDENLTAKVADFGLSKLVGDPEKTHVTTQVKGTMGYLDPEYYMTNQLTEKSDVYGFGVVLLELLTGRSPIERGKYVVREVKTKMNKSRSLYDLQELLDTTIIASSGNLKGFEKYVDLALRCVEEEGVNRPSMGEVVKEIENIMQLAGLNPNSDSATSSRTYEDAIKGSGDPYGSESFQYSGNFPASKLEPQ</sequence>
<keyword id="KW-0067">ATP-binding</keyword>
<keyword id="KW-1003">Cell membrane</keyword>
<keyword id="KW-1015">Disulfide bond</keyword>
<keyword id="KW-0325">Glycoprotein</keyword>
<keyword id="KW-0418">Kinase</keyword>
<keyword id="KW-0433">Leucine-rich repeat</keyword>
<keyword id="KW-0472">Membrane</keyword>
<keyword id="KW-0547">Nucleotide-binding</keyword>
<keyword id="KW-0597">Phosphoprotein</keyword>
<keyword id="KW-0675">Receptor</keyword>
<keyword id="KW-1185">Reference proteome</keyword>
<keyword id="KW-0677">Repeat</keyword>
<keyword id="KW-0723">Serine/threonine-protein kinase</keyword>
<keyword id="KW-0732">Signal</keyword>
<keyword id="KW-0808">Transferase</keyword>
<keyword id="KW-0812">Transmembrane</keyword>
<keyword id="KW-1133">Transmembrane helix</keyword>
<feature type="signal peptide" evidence="1">
    <location>
        <begin position="1"/>
        <end position="23"/>
    </location>
</feature>
<feature type="chain" id="PRO_5014312114" description="Leucine-rich repeat receptor protein kinase HPCA1" evidence="1">
    <location>
        <begin position="24"/>
        <end position="953"/>
    </location>
</feature>
<feature type="topological domain" description="Extracellular" evidence="7">
    <location>
        <begin position="24"/>
        <end position="558"/>
    </location>
</feature>
<feature type="transmembrane region" description="Helical" evidence="1">
    <location>
        <begin position="559"/>
        <end position="579"/>
    </location>
</feature>
<feature type="topological domain" description="Cytoplasmic" evidence="7">
    <location>
        <begin position="580"/>
        <end position="953"/>
    </location>
</feature>
<feature type="repeat" description="LRR 1" evidence="1">
    <location>
        <begin position="64"/>
        <end position="88"/>
    </location>
</feature>
<feature type="repeat" description="LRR 2" evidence="1">
    <location>
        <begin position="89"/>
        <end position="113"/>
    </location>
</feature>
<feature type="repeat" description="LRR 3" evidence="1">
    <location>
        <begin position="115"/>
        <end position="137"/>
    </location>
</feature>
<feature type="repeat" description="LRR 4" evidence="1">
    <location>
        <begin position="138"/>
        <end position="162"/>
    </location>
</feature>
<feature type="repeat" description="LRR 5" evidence="1">
    <location>
        <begin position="164"/>
        <end position="187"/>
    </location>
</feature>
<feature type="repeat" description="LRR 6" evidence="1">
    <location>
        <begin position="192"/>
        <end position="216"/>
    </location>
</feature>
<feature type="repeat" description="LRR 7" evidence="1">
    <location>
        <begin position="218"/>
        <end position="241"/>
    </location>
</feature>
<feature type="repeat" description="LRR 8" evidence="1">
    <location>
        <begin position="242"/>
        <end position="265"/>
    </location>
</feature>
<feature type="repeat" description="LRR 9" evidence="1">
    <location>
        <begin position="266"/>
        <end position="290"/>
    </location>
</feature>
<feature type="repeat" description="LRR 10" evidence="1">
    <location>
        <begin position="292"/>
        <end position="311"/>
    </location>
</feature>
<feature type="repeat" description="LRR 11" evidence="1">
    <location>
        <begin position="313"/>
        <end position="337"/>
    </location>
</feature>
<feature type="repeat" description="LRR 12" evidence="1">
    <location>
        <begin position="339"/>
        <end position="361"/>
    </location>
</feature>
<feature type="repeat" description="LRR 13" evidence="1">
    <location>
        <begin position="362"/>
        <end position="384"/>
    </location>
</feature>
<feature type="domain" description="Protein kinase" evidence="2">
    <location>
        <begin position="631"/>
        <end position="905"/>
    </location>
</feature>
<feature type="region of interest" description="Disordered" evidence="4">
    <location>
        <begin position="912"/>
        <end position="953"/>
    </location>
</feature>
<feature type="compositionally biased region" description="Polar residues" evidence="4">
    <location>
        <begin position="912"/>
        <end position="921"/>
    </location>
</feature>
<feature type="active site" description="Proton acceptor" evidence="2">
    <location>
        <position position="755"/>
    </location>
</feature>
<feature type="binding site" evidence="2">
    <location>
        <begin position="637"/>
        <end position="645"/>
    </location>
    <ligand>
        <name>ATP</name>
        <dbReference type="ChEBI" id="CHEBI:30616"/>
    </ligand>
</feature>
<feature type="binding site" evidence="2">
    <location>
        <position position="659"/>
    </location>
    <ligand>
        <name>ATP</name>
        <dbReference type="ChEBI" id="CHEBI:30616"/>
    </ligand>
</feature>
<feature type="modified residue" description="Phosphoserine" evidence="5">
    <location>
        <position position="606"/>
    </location>
</feature>
<feature type="modified residue" description="Phosphoserine" evidence="5">
    <location>
        <position position="607"/>
    </location>
</feature>
<feature type="modified residue" description="Phosphothreonine" evidence="5">
    <location>
        <position position="786"/>
    </location>
</feature>
<feature type="modified residue" description="Phosphothreonine" evidence="5">
    <location>
        <position position="789"/>
    </location>
</feature>
<feature type="modified residue" description="Phosphothreonine" evidence="5">
    <location>
        <position position="790"/>
    </location>
</feature>
<feature type="modified residue" description="Phosphoserine" evidence="5">
    <location>
        <position position="942"/>
    </location>
</feature>
<feature type="glycosylation site" description="N-linked (GlcNAc...) asparagine" evidence="3">
    <location>
        <position position="182"/>
    </location>
</feature>
<feature type="glycosylation site" description="N-linked (GlcNAc...) asparagine" evidence="3">
    <location>
        <position position="217"/>
    </location>
</feature>
<feature type="glycosylation site" description="N-linked (GlcNAc...) asparagine" evidence="3">
    <location>
        <position position="264"/>
    </location>
</feature>
<feature type="glycosylation site" description="N-linked (GlcNAc...) asparagine" evidence="3">
    <location>
        <position position="284"/>
    </location>
</feature>
<feature type="glycosylation site" description="N-linked (GlcNAc...) asparagine" evidence="3">
    <location>
        <position position="298"/>
    </location>
</feature>
<feature type="glycosylation site" description="N-linked (GlcNAc...) asparagine" evidence="3">
    <location>
        <position position="411"/>
    </location>
</feature>
<feature type="glycosylation site" description="N-linked (GlcNAc...) asparagine" evidence="3">
    <location>
        <position position="456"/>
    </location>
</feature>
<feature type="glycosylation site" description="N-linked (GlcNAc...) asparagine" evidence="3">
    <location>
        <position position="459"/>
    </location>
</feature>
<feature type="glycosylation site" description="N-linked (GlcNAc...) asparagine" evidence="3">
    <location>
        <position position="510"/>
    </location>
</feature>
<feature type="glycosylation site" description="N-linked (GlcNAc...) asparagine" evidence="3">
    <location>
        <position position="523"/>
    </location>
</feature>
<feature type="disulfide bond" description="Associated with receptor activation" evidence="5">
    <location>
        <begin position="421"/>
        <end position="424"/>
    </location>
</feature>
<feature type="disulfide bond" description="Associated with receptor activation" evidence="5">
    <location>
        <begin position="434"/>
        <end position="436"/>
    </location>
</feature>
<feature type="mutagenesis site" description="Loss of activation by hydrogen peroxide; when associated with S-424." evidence="5">
    <original>C</original>
    <variation>S</variation>
    <location>
        <position position="421"/>
    </location>
</feature>
<feature type="mutagenesis site" description="Loss of activation by hydrogen peroxide; when associated with S-421." evidence="5">
    <original>C</original>
    <variation>S</variation>
    <location>
        <position position="424"/>
    </location>
</feature>
<feature type="mutagenesis site" description="Loss of activation by hydrogen peroxide; when associated with S-436." evidence="5">
    <original>C</original>
    <variation>S</variation>
    <location>
        <position position="434"/>
    </location>
</feature>
<feature type="mutagenesis site" description="Loss of activation by hydrogen peroxide; when associated with S-434." evidence="5">
    <original>C</original>
    <variation>S</variation>
    <location>
        <position position="436"/>
    </location>
</feature>
<feature type="mutagenesis site" description="Loss of catalytic activity." evidence="5">
    <original>K</original>
    <variation>E</variation>
    <location>
        <position position="659"/>
    </location>
</feature>
<feature type="mutagenesis site" description="Loss of catalytic activity." evidence="5">
    <original>D</original>
    <variation>L</variation>
    <location>
        <position position="773"/>
    </location>
</feature>
<accession>Q8GZ99</accession>
<name>HPCA1_ARATH</name>
<organism>
    <name type="scientific">Arabidopsis thaliana</name>
    <name type="common">Mouse-ear cress</name>
    <dbReference type="NCBI Taxonomy" id="3702"/>
    <lineage>
        <taxon>Eukaryota</taxon>
        <taxon>Viridiplantae</taxon>
        <taxon>Streptophyta</taxon>
        <taxon>Embryophyta</taxon>
        <taxon>Tracheophyta</taxon>
        <taxon>Spermatophyta</taxon>
        <taxon>Magnoliopsida</taxon>
        <taxon>eudicotyledons</taxon>
        <taxon>Gunneridae</taxon>
        <taxon>Pentapetalae</taxon>
        <taxon>rosids</taxon>
        <taxon>malvids</taxon>
        <taxon>Brassicales</taxon>
        <taxon>Brassicaceae</taxon>
        <taxon>Camelineae</taxon>
        <taxon>Arabidopsis</taxon>
    </lineage>
</organism>
<gene>
    <name evidence="6" type="primary">HPCA1</name>
    <name evidence="8" type="ordered locus">At5g49760</name>
    <name evidence="9" type="ORF">K2I5</name>
</gene>
<dbReference type="EC" id="2.7.11.1" evidence="5"/>
<dbReference type="EMBL" id="FJ708797">
    <property type="protein sequence ID" value="ACN59388.1"/>
    <property type="molecule type" value="mRNA"/>
</dbReference>
<dbReference type="EMBL" id="AB025613">
    <property type="status" value="NOT_ANNOTATED_CDS"/>
    <property type="molecule type" value="Genomic_DNA"/>
</dbReference>
<dbReference type="EMBL" id="CP002688">
    <property type="protein sequence ID" value="AED95854.1"/>
    <property type="molecule type" value="Genomic_DNA"/>
</dbReference>
<dbReference type="EMBL" id="AK117123">
    <property type="protein sequence ID" value="BAC41801.1"/>
    <property type="molecule type" value="mRNA"/>
</dbReference>
<dbReference type="EMBL" id="BT006486">
    <property type="protein sequence ID" value="AAP21294.1"/>
    <property type="molecule type" value="mRNA"/>
</dbReference>
<dbReference type="RefSeq" id="NP_199787.2">
    <property type="nucleotide sequence ID" value="NM_124354.3"/>
</dbReference>
<dbReference type="SMR" id="Q8GZ99"/>
<dbReference type="FunCoup" id="Q8GZ99">
    <property type="interactions" value="551"/>
</dbReference>
<dbReference type="IntAct" id="Q8GZ99">
    <property type="interactions" value="36"/>
</dbReference>
<dbReference type="STRING" id="3702.Q8GZ99"/>
<dbReference type="GlyCosmos" id="Q8GZ99">
    <property type="glycosylation" value="10 sites, No reported glycans"/>
</dbReference>
<dbReference type="GlyGen" id="Q8GZ99">
    <property type="glycosylation" value="10 sites"/>
</dbReference>
<dbReference type="iPTMnet" id="Q8GZ99"/>
<dbReference type="PaxDb" id="3702-AT5G49760.1"/>
<dbReference type="ProteomicsDB" id="179057"/>
<dbReference type="EnsemblPlants" id="AT5G49760.1">
    <property type="protein sequence ID" value="AT5G49760.1"/>
    <property type="gene ID" value="AT5G49760"/>
</dbReference>
<dbReference type="GeneID" id="835039"/>
<dbReference type="Gramene" id="AT5G49760.1">
    <property type="protein sequence ID" value="AT5G49760.1"/>
    <property type="gene ID" value="AT5G49760"/>
</dbReference>
<dbReference type="KEGG" id="ath:AT5G49760"/>
<dbReference type="Araport" id="AT5G49760"/>
<dbReference type="TAIR" id="AT5G49760">
    <property type="gene designation" value="HPCA1"/>
</dbReference>
<dbReference type="eggNOG" id="ENOG502QQH6">
    <property type="taxonomic scope" value="Eukaryota"/>
</dbReference>
<dbReference type="HOGENOM" id="CLU_000288_14_1_1"/>
<dbReference type="InParanoid" id="Q8GZ99"/>
<dbReference type="OMA" id="HPYENEY"/>
<dbReference type="OrthoDB" id="2015206at2759"/>
<dbReference type="PhylomeDB" id="Q8GZ99"/>
<dbReference type="PRO" id="PR:Q8GZ99"/>
<dbReference type="Proteomes" id="UP000006548">
    <property type="component" value="Chromosome 5"/>
</dbReference>
<dbReference type="ExpressionAtlas" id="Q8GZ99">
    <property type="expression patterns" value="baseline and differential"/>
</dbReference>
<dbReference type="GO" id="GO:0000325">
    <property type="term" value="C:plant-type vacuole"/>
    <property type="evidence" value="ECO:0007005"/>
    <property type="project" value="TAIR"/>
</dbReference>
<dbReference type="GO" id="GO:0005886">
    <property type="term" value="C:plasma membrane"/>
    <property type="evidence" value="ECO:0000314"/>
    <property type="project" value="UniProtKB"/>
</dbReference>
<dbReference type="GO" id="GO:0009536">
    <property type="term" value="C:plastid"/>
    <property type="evidence" value="ECO:0007005"/>
    <property type="project" value="TAIR"/>
</dbReference>
<dbReference type="GO" id="GO:0005524">
    <property type="term" value="F:ATP binding"/>
    <property type="evidence" value="ECO:0007669"/>
    <property type="project" value="UniProtKB-KW"/>
</dbReference>
<dbReference type="GO" id="GO:0016301">
    <property type="term" value="F:kinase activity"/>
    <property type="evidence" value="ECO:0000314"/>
    <property type="project" value="UniProtKB"/>
</dbReference>
<dbReference type="GO" id="GO:0004675">
    <property type="term" value="F:transmembrane receptor protein serine/threonine kinase activity"/>
    <property type="evidence" value="ECO:0000314"/>
    <property type="project" value="TAIR"/>
</dbReference>
<dbReference type="GO" id="GO:0009593">
    <property type="term" value="P:detection of chemical stimulus"/>
    <property type="evidence" value="ECO:0000315"/>
    <property type="project" value="UniProtKB"/>
</dbReference>
<dbReference type="GO" id="GO:0046777">
    <property type="term" value="P:protein autophosphorylation"/>
    <property type="evidence" value="ECO:0000314"/>
    <property type="project" value="UniProtKB"/>
</dbReference>
<dbReference type="GO" id="GO:0090333">
    <property type="term" value="P:regulation of stomatal closure"/>
    <property type="evidence" value="ECO:0000315"/>
    <property type="project" value="UniProtKB"/>
</dbReference>
<dbReference type="CDD" id="cd14066">
    <property type="entry name" value="STKc_IRAK"/>
    <property type="match status" value="1"/>
</dbReference>
<dbReference type="FunFam" id="3.80.10.10:FF:001163">
    <property type="entry name" value="Leucine-rich repeat (LRR) family protein"/>
    <property type="match status" value="1"/>
</dbReference>
<dbReference type="FunFam" id="3.80.10.10:FF:000363">
    <property type="entry name" value="Leucine-rich repeat family protein"/>
    <property type="match status" value="1"/>
</dbReference>
<dbReference type="FunFam" id="3.30.200.20:FF:000328">
    <property type="entry name" value="Leucine-rich repeat protein kinase family protein"/>
    <property type="match status" value="1"/>
</dbReference>
<dbReference type="FunFam" id="3.80.10.10:FF:000542">
    <property type="entry name" value="Leucine-rich repeat protein kinase family protein"/>
    <property type="match status" value="1"/>
</dbReference>
<dbReference type="FunFam" id="1.10.510.10:FF:000453">
    <property type="entry name" value="LRR receptor-like serine/threonine-protein kinase HSL2"/>
    <property type="match status" value="1"/>
</dbReference>
<dbReference type="Gene3D" id="3.30.200.20">
    <property type="entry name" value="Phosphorylase Kinase, domain 1"/>
    <property type="match status" value="1"/>
</dbReference>
<dbReference type="Gene3D" id="3.80.10.10">
    <property type="entry name" value="Ribonuclease Inhibitor"/>
    <property type="match status" value="3"/>
</dbReference>
<dbReference type="Gene3D" id="1.10.510.10">
    <property type="entry name" value="Transferase(Phosphotransferase) domain 1"/>
    <property type="match status" value="1"/>
</dbReference>
<dbReference type="InterPro" id="IPR011009">
    <property type="entry name" value="Kinase-like_dom_sf"/>
</dbReference>
<dbReference type="InterPro" id="IPR001611">
    <property type="entry name" value="Leu-rich_rpt"/>
</dbReference>
<dbReference type="InterPro" id="IPR032675">
    <property type="entry name" value="LRR_dom_sf"/>
</dbReference>
<dbReference type="InterPro" id="IPR013210">
    <property type="entry name" value="LRR_N_plant-typ"/>
</dbReference>
<dbReference type="InterPro" id="IPR000719">
    <property type="entry name" value="Prot_kinase_dom"/>
</dbReference>
<dbReference type="InterPro" id="IPR017441">
    <property type="entry name" value="Protein_kinase_ATP_BS"/>
</dbReference>
<dbReference type="InterPro" id="IPR008271">
    <property type="entry name" value="Ser/Thr_kinase_AS"/>
</dbReference>
<dbReference type="PANTHER" id="PTHR45974:SF266">
    <property type="entry name" value="LEUCINE-RICH REPEAT RECEPTOR PROTEIN KINASE HPCA1"/>
    <property type="match status" value="1"/>
</dbReference>
<dbReference type="PANTHER" id="PTHR45974">
    <property type="entry name" value="RECEPTOR-LIKE PROTEIN 55"/>
    <property type="match status" value="1"/>
</dbReference>
<dbReference type="Pfam" id="PF00560">
    <property type="entry name" value="LRR_1"/>
    <property type="match status" value="3"/>
</dbReference>
<dbReference type="Pfam" id="PF08263">
    <property type="entry name" value="LRRNT_2"/>
    <property type="match status" value="1"/>
</dbReference>
<dbReference type="Pfam" id="PF00069">
    <property type="entry name" value="Pkinase"/>
    <property type="match status" value="1"/>
</dbReference>
<dbReference type="SMART" id="SM00220">
    <property type="entry name" value="S_TKc"/>
    <property type="match status" value="1"/>
</dbReference>
<dbReference type="SUPFAM" id="SSF52058">
    <property type="entry name" value="L domain-like"/>
    <property type="match status" value="1"/>
</dbReference>
<dbReference type="SUPFAM" id="SSF56112">
    <property type="entry name" value="Protein kinase-like (PK-like)"/>
    <property type="match status" value="1"/>
</dbReference>
<dbReference type="PROSITE" id="PS51450">
    <property type="entry name" value="LRR"/>
    <property type="match status" value="6"/>
</dbReference>
<dbReference type="PROSITE" id="PS00107">
    <property type="entry name" value="PROTEIN_KINASE_ATP"/>
    <property type="match status" value="1"/>
</dbReference>
<dbReference type="PROSITE" id="PS50011">
    <property type="entry name" value="PROTEIN_KINASE_DOM"/>
    <property type="match status" value="1"/>
</dbReference>
<dbReference type="PROSITE" id="PS00108">
    <property type="entry name" value="PROTEIN_KINASE_ST"/>
    <property type="match status" value="1"/>
</dbReference>
<proteinExistence type="evidence at protein level"/>
<evidence type="ECO:0000255" key="1"/>
<evidence type="ECO:0000255" key="2">
    <source>
        <dbReference type="PROSITE-ProRule" id="PRU00159"/>
    </source>
</evidence>
<evidence type="ECO:0000255" key="3">
    <source>
        <dbReference type="PROSITE-ProRule" id="PRU00498"/>
    </source>
</evidence>
<evidence type="ECO:0000256" key="4">
    <source>
        <dbReference type="SAM" id="MobiDB-lite"/>
    </source>
</evidence>
<evidence type="ECO:0000269" key="5">
    <source>
    </source>
</evidence>
<evidence type="ECO:0000303" key="6">
    <source>
    </source>
</evidence>
<evidence type="ECO:0000305" key="7"/>
<evidence type="ECO:0000312" key="8">
    <source>
        <dbReference type="Araport" id="AT5G49760"/>
    </source>
</evidence>
<evidence type="ECO:0000312" key="9">
    <source>
        <dbReference type="EMBL" id="AB025613"/>
    </source>
</evidence>